<gene>
    <name evidence="1" type="primary">vapC48</name>
    <name type="ordered locus">MT3799</name>
</gene>
<accession>P9WF46</accession>
<accession>L0TG87</accession>
<accession>O69665</accession>
<accession>Q7D518</accession>
<organism>
    <name type="scientific">Mycobacterium tuberculosis (strain CDC 1551 / Oshkosh)</name>
    <dbReference type="NCBI Taxonomy" id="83331"/>
    <lineage>
        <taxon>Bacteria</taxon>
        <taxon>Bacillati</taxon>
        <taxon>Actinomycetota</taxon>
        <taxon>Actinomycetes</taxon>
        <taxon>Mycobacteriales</taxon>
        <taxon>Mycobacteriaceae</taxon>
        <taxon>Mycobacterium</taxon>
        <taxon>Mycobacterium tuberculosis complex</taxon>
    </lineage>
</organism>
<proteinExistence type="inferred from homology"/>
<reference key="1">
    <citation type="journal article" date="2002" name="J. Bacteriol.">
        <title>Whole-genome comparison of Mycobacterium tuberculosis clinical and laboratory strains.</title>
        <authorList>
            <person name="Fleischmann R.D."/>
            <person name="Alland D."/>
            <person name="Eisen J.A."/>
            <person name="Carpenter L."/>
            <person name="White O."/>
            <person name="Peterson J.D."/>
            <person name="DeBoy R.T."/>
            <person name="Dodson R.J."/>
            <person name="Gwinn M.L."/>
            <person name="Haft D.H."/>
            <person name="Hickey E.K."/>
            <person name="Kolonay J.F."/>
            <person name="Nelson W.C."/>
            <person name="Umayam L.A."/>
            <person name="Ermolaeva M.D."/>
            <person name="Salzberg S.L."/>
            <person name="Delcher A."/>
            <person name="Utterback T.R."/>
            <person name="Weidman J.F."/>
            <person name="Khouri H.M."/>
            <person name="Gill J."/>
            <person name="Mikula A."/>
            <person name="Bishai W."/>
            <person name="Jacobs W.R. Jr."/>
            <person name="Venter J.C."/>
            <person name="Fraser C.M."/>
        </authorList>
    </citation>
    <scope>NUCLEOTIDE SEQUENCE [LARGE SCALE GENOMIC DNA]</scope>
    <source>
        <strain>CDC 1551 / Oshkosh</strain>
    </source>
</reference>
<name>VPC48_MYCTO</name>
<keyword id="KW-0378">Hydrolase</keyword>
<keyword id="KW-0460">Magnesium</keyword>
<keyword id="KW-0479">Metal-binding</keyword>
<keyword id="KW-0540">Nuclease</keyword>
<keyword id="KW-1185">Reference proteome</keyword>
<keyword id="KW-1277">Toxin-antitoxin system</keyword>
<sequence>MSETFDVDVLVHATHRASPFHDKAKTLVERFLAGPGLVYLLWPVALGYLRVVTHPTLLGAPLAPEVAVENIEQFTSRPHVRQVGEANGFWPVYRRVADPVKPRGNLVPDAHLVALMRHHGIATIWSHDRDFRKFEGIRIRDPFSG</sequence>
<evidence type="ECO:0000255" key="1">
    <source>
        <dbReference type="HAMAP-Rule" id="MF_00265"/>
    </source>
</evidence>
<feature type="chain" id="PRO_0000428602" description="Ribonuclease VapC48">
    <location>
        <begin position="1"/>
        <end position="145"/>
    </location>
</feature>
<feature type="domain" description="PINc" evidence="1">
    <location>
        <begin position="15"/>
        <end position="141"/>
    </location>
</feature>
<feature type="binding site" evidence="1">
    <location>
        <position position="6"/>
    </location>
    <ligand>
        <name>Mg(2+)</name>
        <dbReference type="ChEBI" id="CHEBI:18420"/>
    </ligand>
</feature>
<feature type="binding site" evidence="1">
    <location>
        <position position="109"/>
    </location>
    <ligand>
        <name>Mg(2+)</name>
        <dbReference type="ChEBI" id="CHEBI:18420"/>
    </ligand>
</feature>
<comment type="function">
    <text evidence="1">Toxic component of a type II toxin-antitoxin (TA) system. An RNase. Its cognate antitoxin is VapB48 (By similarity).</text>
</comment>
<comment type="cofactor">
    <cofactor evidence="1">
        <name>Mg(2+)</name>
        <dbReference type="ChEBI" id="CHEBI:18420"/>
    </cofactor>
</comment>
<comment type="similarity">
    <text evidence="1">Belongs to the PINc/VapC protein family.</text>
</comment>
<protein>
    <recommendedName>
        <fullName evidence="1">Ribonuclease VapC48</fullName>
        <shortName evidence="1">RNase VapC48</shortName>
        <ecNumber evidence="1">3.1.-.-</ecNumber>
    </recommendedName>
    <alternativeName>
        <fullName evidence="1">Toxin VapC48</fullName>
    </alternativeName>
</protein>
<dbReference type="EC" id="3.1.-.-" evidence="1"/>
<dbReference type="EMBL" id="AE000516">
    <property type="protein sequence ID" value="AAK48166.1"/>
    <property type="molecule type" value="Genomic_DNA"/>
</dbReference>
<dbReference type="PIR" id="B70793">
    <property type="entry name" value="B70793"/>
</dbReference>
<dbReference type="RefSeq" id="WP_003899644.1">
    <property type="nucleotide sequence ID" value="NZ_KK341227.1"/>
</dbReference>
<dbReference type="SMR" id="P9WF46"/>
<dbReference type="KEGG" id="mtc:MT3799"/>
<dbReference type="PATRIC" id="fig|83331.31.peg.4091"/>
<dbReference type="HOGENOM" id="CLU_146668_1_0_11"/>
<dbReference type="Proteomes" id="UP000001020">
    <property type="component" value="Chromosome"/>
</dbReference>
<dbReference type="GO" id="GO:0000287">
    <property type="term" value="F:magnesium ion binding"/>
    <property type="evidence" value="ECO:0007669"/>
    <property type="project" value="UniProtKB-UniRule"/>
</dbReference>
<dbReference type="GO" id="GO:0004540">
    <property type="term" value="F:RNA nuclease activity"/>
    <property type="evidence" value="ECO:0007669"/>
    <property type="project" value="InterPro"/>
</dbReference>
<dbReference type="GO" id="GO:0045926">
    <property type="term" value="P:negative regulation of growth"/>
    <property type="evidence" value="ECO:0007669"/>
    <property type="project" value="UniProtKB-ARBA"/>
</dbReference>
<dbReference type="Gene3D" id="3.40.50.1010">
    <property type="entry name" value="5'-nuclease"/>
    <property type="match status" value="1"/>
</dbReference>
<dbReference type="HAMAP" id="MF_00265">
    <property type="entry name" value="VapC_Nob1"/>
    <property type="match status" value="1"/>
</dbReference>
<dbReference type="InterPro" id="IPR006226">
    <property type="entry name" value="Mtu_PIN"/>
</dbReference>
<dbReference type="InterPro" id="IPR029060">
    <property type="entry name" value="PIN-like_dom_sf"/>
</dbReference>
<dbReference type="InterPro" id="IPR002716">
    <property type="entry name" value="PIN_dom"/>
</dbReference>
<dbReference type="InterPro" id="IPR022907">
    <property type="entry name" value="VapC_family"/>
</dbReference>
<dbReference type="NCBIfam" id="TIGR00028">
    <property type="entry name" value="Mtu_PIN_fam"/>
    <property type="match status" value="1"/>
</dbReference>
<dbReference type="Pfam" id="PF01850">
    <property type="entry name" value="PIN"/>
    <property type="match status" value="1"/>
</dbReference>
<dbReference type="SUPFAM" id="SSF88723">
    <property type="entry name" value="PIN domain-like"/>
    <property type="match status" value="1"/>
</dbReference>